<sequence>MRILVEIAYQGNNFLGFQIQQNGRTVQQQFEKLLQRMHKRHVRIHPSSRTDRGVHAIQQYFHFDTELNIPMSQWQYAMNRTLPDDIYVNNVVTVDDDFHCRYDCVGKRYRYKVYQAQHRDPFQSGLKTFIPETLDLDKMNRAAQQFIGTHDFTGFCSQKTEVESKVRTLYQSEIVKTDDGFDYIVTGSGFLYNMVRVLVAFLIEVGKGRHEISDVPKLLESKNRKNVPFTATAEGLYLEKIYLDENELLKDFGNDIKIHRKKSLQND</sequence>
<feature type="chain" id="PRO_0000057453" description="tRNA pseudouridine synthase A">
    <location>
        <begin position="1"/>
        <end position="267"/>
    </location>
</feature>
<feature type="active site" description="Nucleophile" evidence="1">
    <location>
        <position position="51"/>
    </location>
</feature>
<feature type="binding site" evidence="1">
    <location>
        <position position="109"/>
    </location>
    <ligand>
        <name>substrate</name>
    </ligand>
</feature>
<dbReference type="EC" id="5.4.99.12" evidence="1"/>
<dbReference type="EMBL" id="BX571857">
    <property type="protein sequence ID" value="CAG43921.1"/>
    <property type="molecule type" value="Genomic_DNA"/>
</dbReference>
<dbReference type="RefSeq" id="WP_001221855.1">
    <property type="nucleotide sequence ID" value="NC_002953.3"/>
</dbReference>
<dbReference type="SMR" id="Q6G7A2"/>
<dbReference type="KEGG" id="sas:SAS2110"/>
<dbReference type="HOGENOM" id="CLU_014673_0_1_9"/>
<dbReference type="GO" id="GO:0003723">
    <property type="term" value="F:RNA binding"/>
    <property type="evidence" value="ECO:0007669"/>
    <property type="project" value="InterPro"/>
</dbReference>
<dbReference type="GO" id="GO:0160147">
    <property type="term" value="F:tRNA pseudouridine(38-40) synthase activity"/>
    <property type="evidence" value="ECO:0007669"/>
    <property type="project" value="UniProtKB-EC"/>
</dbReference>
<dbReference type="GO" id="GO:0031119">
    <property type="term" value="P:tRNA pseudouridine synthesis"/>
    <property type="evidence" value="ECO:0007669"/>
    <property type="project" value="UniProtKB-UniRule"/>
</dbReference>
<dbReference type="CDD" id="cd02570">
    <property type="entry name" value="PseudoU_synth_EcTruA"/>
    <property type="match status" value="1"/>
</dbReference>
<dbReference type="FunFam" id="3.30.70.580:FF:000001">
    <property type="entry name" value="tRNA pseudouridine synthase A"/>
    <property type="match status" value="1"/>
</dbReference>
<dbReference type="Gene3D" id="3.30.70.660">
    <property type="entry name" value="Pseudouridine synthase I, catalytic domain, C-terminal subdomain"/>
    <property type="match status" value="1"/>
</dbReference>
<dbReference type="Gene3D" id="3.30.70.580">
    <property type="entry name" value="Pseudouridine synthase I, catalytic domain, N-terminal subdomain"/>
    <property type="match status" value="1"/>
</dbReference>
<dbReference type="HAMAP" id="MF_00171">
    <property type="entry name" value="TruA"/>
    <property type="match status" value="1"/>
</dbReference>
<dbReference type="InterPro" id="IPR020103">
    <property type="entry name" value="PsdUridine_synth_cat_dom_sf"/>
</dbReference>
<dbReference type="InterPro" id="IPR001406">
    <property type="entry name" value="PsdUridine_synth_TruA"/>
</dbReference>
<dbReference type="InterPro" id="IPR020097">
    <property type="entry name" value="PsdUridine_synth_TruA_a/b_dom"/>
</dbReference>
<dbReference type="InterPro" id="IPR020095">
    <property type="entry name" value="PsdUridine_synth_TruA_C"/>
</dbReference>
<dbReference type="InterPro" id="IPR020094">
    <property type="entry name" value="TruA/RsuA/RluB/E/F_N"/>
</dbReference>
<dbReference type="NCBIfam" id="TIGR00071">
    <property type="entry name" value="hisT_truA"/>
    <property type="match status" value="1"/>
</dbReference>
<dbReference type="PANTHER" id="PTHR11142">
    <property type="entry name" value="PSEUDOURIDYLATE SYNTHASE"/>
    <property type="match status" value="1"/>
</dbReference>
<dbReference type="PANTHER" id="PTHR11142:SF0">
    <property type="entry name" value="TRNA PSEUDOURIDINE SYNTHASE-LIKE 1"/>
    <property type="match status" value="1"/>
</dbReference>
<dbReference type="Pfam" id="PF01416">
    <property type="entry name" value="PseudoU_synth_1"/>
    <property type="match status" value="2"/>
</dbReference>
<dbReference type="PIRSF" id="PIRSF001430">
    <property type="entry name" value="tRNA_psdUrid_synth"/>
    <property type="match status" value="1"/>
</dbReference>
<dbReference type="SUPFAM" id="SSF55120">
    <property type="entry name" value="Pseudouridine synthase"/>
    <property type="match status" value="1"/>
</dbReference>
<reference key="1">
    <citation type="journal article" date="2004" name="Proc. Natl. Acad. Sci. U.S.A.">
        <title>Complete genomes of two clinical Staphylococcus aureus strains: evidence for the rapid evolution of virulence and drug resistance.</title>
        <authorList>
            <person name="Holden M.T.G."/>
            <person name="Feil E.J."/>
            <person name="Lindsay J.A."/>
            <person name="Peacock S.J."/>
            <person name="Day N.P.J."/>
            <person name="Enright M.C."/>
            <person name="Foster T.J."/>
            <person name="Moore C.E."/>
            <person name="Hurst L."/>
            <person name="Atkin R."/>
            <person name="Barron A."/>
            <person name="Bason N."/>
            <person name="Bentley S.D."/>
            <person name="Chillingworth C."/>
            <person name="Chillingworth T."/>
            <person name="Churcher C."/>
            <person name="Clark L."/>
            <person name="Corton C."/>
            <person name="Cronin A."/>
            <person name="Doggett J."/>
            <person name="Dowd L."/>
            <person name="Feltwell T."/>
            <person name="Hance Z."/>
            <person name="Harris B."/>
            <person name="Hauser H."/>
            <person name="Holroyd S."/>
            <person name="Jagels K."/>
            <person name="James K.D."/>
            <person name="Lennard N."/>
            <person name="Line A."/>
            <person name="Mayes R."/>
            <person name="Moule S."/>
            <person name="Mungall K."/>
            <person name="Ormond D."/>
            <person name="Quail M.A."/>
            <person name="Rabbinowitsch E."/>
            <person name="Rutherford K.M."/>
            <person name="Sanders M."/>
            <person name="Sharp S."/>
            <person name="Simmonds M."/>
            <person name="Stevens K."/>
            <person name="Whitehead S."/>
            <person name="Barrell B.G."/>
            <person name="Spratt B.G."/>
            <person name="Parkhill J."/>
        </authorList>
    </citation>
    <scope>NUCLEOTIDE SEQUENCE [LARGE SCALE GENOMIC DNA]</scope>
    <source>
        <strain>MSSA476</strain>
    </source>
</reference>
<gene>
    <name evidence="1" type="primary">truA</name>
    <name type="ordered locus">SAS2110</name>
</gene>
<protein>
    <recommendedName>
        <fullName evidence="1">tRNA pseudouridine synthase A</fullName>
        <ecNumber evidence="1">5.4.99.12</ecNumber>
    </recommendedName>
    <alternativeName>
        <fullName evidence="1">tRNA pseudouridine(38-40) synthase</fullName>
    </alternativeName>
    <alternativeName>
        <fullName evidence="1">tRNA pseudouridylate synthase I</fullName>
    </alternativeName>
    <alternativeName>
        <fullName evidence="1">tRNA-uridine isomerase I</fullName>
    </alternativeName>
</protein>
<comment type="function">
    <text evidence="1">Formation of pseudouridine at positions 38, 39 and 40 in the anticodon stem and loop of transfer RNAs.</text>
</comment>
<comment type="catalytic activity">
    <reaction evidence="1">
        <text>uridine(38/39/40) in tRNA = pseudouridine(38/39/40) in tRNA</text>
        <dbReference type="Rhea" id="RHEA:22376"/>
        <dbReference type="Rhea" id="RHEA-COMP:10085"/>
        <dbReference type="Rhea" id="RHEA-COMP:10087"/>
        <dbReference type="ChEBI" id="CHEBI:65314"/>
        <dbReference type="ChEBI" id="CHEBI:65315"/>
        <dbReference type="EC" id="5.4.99.12"/>
    </reaction>
</comment>
<comment type="subunit">
    <text evidence="1">Homodimer.</text>
</comment>
<comment type="similarity">
    <text evidence="1">Belongs to the tRNA pseudouridine synthase TruA family.</text>
</comment>
<evidence type="ECO:0000255" key="1">
    <source>
        <dbReference type="HAMAP-Rule" id="MF_00171"/>
    </source>
</evidence>
<accession>Q6G7A2</accession>
<organism>
    <name type="scientific">Staphylococcus aureus (strain MSSA476)</name>
    <dbReference type="NCBI Taxonomy" id="282459"/>
    <lineage>
        <taxon>Bacteria</taxon>
        <taxon>Bacillati</taxon>
        <taxon>Bacillota</taxon>
        <taxon>Bacilli</taxon>
        <taxon>Bacillales</taxon>
        <taxon>Staphylococcaceae</taxon>
        <taxon>Staphylococcus</taxon>
    </lineage>
</organism>
<proteinExistence type="inferred from homology"/>
<name>TRUA_STAAS</name>
<keyword id="KW-0413">Isomerase</keyword>
<keyword id="KW-0819">tRNA processing</keyword>